<organism>
    <name type="scientific">Cricetulus griseus</name>
    <name type="common">Chinese hamster</name>
    <name type="synonym">Cricetulus barabensis griseus</name>
    <dbReference type="NCBI Taxonomy" id="10029"/>
    <lineage>
        <taxon>Eukaryota</taxon>
        <taxon>Metazoa</taxon>
        <taxon>Chordata</taxon>
        <taxon>Craniata</taxon>
        <taxon>Vertebrata</taxon>
        <taxon>Euteleostomi</taxon>
        <taxon>Mammalia</taxon>
        <taxon>Eutheria</taxon>
        <taxon>Euarchontoglires</taxon>
        <taxon>Glires</taxon>
        <taxon>Rodentia</taxon>
        <taxon>Myomorpha</taxon>
        <taxon>Muroidea</taxon>
        <taxon>Cricetidae</taxon>
        <taxon>Cricetinae</taxon>
        <taxon>Cricetulus</taxon>
    </lineage>
</organism>
<sequence length="74" mass="7686">MQLFVRAQGLHTLEVTGQETVAQIKAHVASLEGISPEDQVVLLAGSPLEDEATLGQCGVEALTTLEVAGRMLGG</sequence>
<name>UBIM_CRIGR</name>
<gene>
    <name type="primary">FAU</name>
    <name type="synonym">ASR1</name>
</gene>
<reference key="1">
    <citation type="journal article" date="1999" name="Carcinogenesis">
        <title>Expression cloning for arsenite-resistance resulted in isolation of tumor-suppressor fau cDNA: possible involvement of the ubiquitin system in arsenic carcinogenesis.</title>
        <authorList>
            <person name="Rossman T.G."/>
            <person name="Wang Z."/>
        </authorList>
    </citation>
    <scope>NUCLEOTIDE SEQUENCE [MRNA]</scope>
</reference>
<proteinExistence type="inferred from homology"/>
<accession>Q60435</accession>
<dbReference type="EMBL" id="U41499">
    <property type="protein sequence ID" value="AAA83776.1"/>
    <property type="status" value="ALT_TERM"/>
    <property type="molecule type" value="mRNA"/>
</dbReference>
<dbReference type="RefSeq" id="NP_001233753.1">
    <property type="nucleotide sequence ID" value="NM_001246824.1"/>
</dbReference>
<dbReference type="RefSeq" id="XP_007652861.1">
    <property type="nucleotide sequence ID" value="XM_007654671.2"/>
</dbReference>
<dbReference type="SMR" id="Q60435"/>
<dbReference type="PaxDb" id="10029-NP_001233753.1"/>
<dbReference type="GeneID" id="100689400"/>
<dbReference type="KEGG" id="cge:100689400"/>
<dbReference type="CTD" id="2197"/>
<dbReference type="eggNOG" id="KOG0001">
    <property type="taxonomic scope" value="Eukaryota"/>
</dbReference>
<dbReference type="eggNOG" id="KOG0009">
    <property type="taxonomic scope" value="Eukaryota"/>
</dbReference>
<dbReference type="OrthoDB" id="199599at2759"/>
<dbReference type="Proteomes" id="UP000694386">
    <property type="component" value="Unplaced"/>
</dbReference>
<dbReference type="Proteomes" id="UP001108280">
    <property type="component" value="Chromosome 3"/>
</dbReference>
<dbReference type="CDD" id="cd01793">
    <property type="entry name" value="Ubl_FUBI"/>
    <property type="match status" value="1"/>
</dbReference>
<dbReference type="FunFam" id="3.10.20.90:FF:000114">
    <property type="entry name" value="40S ribosomal protein S30"/>
    <property type="match status" value="1"/>
</dbReference>
<dbReference type="Gene3D" id="3.10.20.90">
    <property type="entry name" value="Phosphatidylinositol 3-kinase Catalytic Subunit, Chain A, domain 1"/>
    <property type="match status" value="1"/>
</dbReference>
<dbReference type="InterPro" id="IPR039415">
    <property type="entry name" value="FUBI"/>
</dbReference>
<dbReference type="InterPro" id="IPR000626">
    <property type="entry name" value="Ubiquitin-like_dom"/>
</dbReference>
<dbReference type="InterPro" id="IPR029071">
    <property type="entry name" value="Ubiquitin-like_domsf"/>
</dbReference>
<dbReference type="InterPro" id="IPR019956">
    <property type="entry name" value="Ubiquitin_dom"/>
</dbReference>
<dbReference type="Pfam" id="PF00240">
    <property type="entry name" value="ubiquitin"/>
    <property type="match status" value="1"/>
</dbReference>
<dbReference type="PRINTS" id="PR00348">
    <property type="entry name" value="UBIQUITIN"/>
</dbReference>
<dbReference type="SMART" id="SM00213">
    <property type="entry name" value="UBQ"/>
    <property type="match status" value="1"/>
</dbReference>
<dbReference type="SUPFAM" id="SSF54236">
    <property type="entry name" value="Ubiquitin-like"/>
    <property type="match status" value="1"/>
</dbReference>
<dbReference type="PROSITE" id="PS50053">
    <property type="entry name" value="UBIQUITIN_2"/>
    <property type="match status" value="1"/>
</dbReference>
<comment type="function">
    <text>Confers arsenite resistance.</text>
</comment>
<comment type="miscellaneous">
    <text>This protein is synthesized with ribosomal S30 as its C-terminal extension.</text>
</comment>
<comment type="similarity">
    <text evidence="1">Belongs to the ubiquitin family.</text>
</comment>
<protein>
    <recommendedName>
        <fullName>Ubiquitin-like protein FUBI</fullName>
    </recommendedName>
    <alternativeName>
        <fullName>Arsenite-resistance protein</fullName>
    </alternativeName>
</protein>
<evidence type="ECO:0000305" key="1"/>
<feature type="chain" id="PRO_0000114881" description="Ubiquitin-like protein FUBI">
    <location>
        <begin position="1"/>
        <end position="74"/>
    </location>
</feature>